<feature type="initiator methionine" description="Removed" evidence="13">
    <location>
        <position position="1"/>
    </location>
</feature>
<feature type="chain" id="PRO_0000425139" description="Probable cytosolic oligopeptidase A">
    <location>
        <begin position="2"/>
        <end position="701"/>
    </location>
</feature>
<feature type="coiled-coil region" evidence="2">
    <location>
        <begin position="148"/>
        <end position="194"/>
    </location>
</feature>
<feature type="active site" evidence="3">
    <location>
        <position position="484"/>
    </location>
</feature>
<feature type="binding site" evidence="3 6 12">
    <location>
        <position position="483"/>
    </location>
    <ligand>
        <name>Zn(2+)</name>
        <dbReference type="ChEBI" id="CHEBI:29105"/>
        <note>catalytic</note>
    </ligand>
</feature>
<feature type="binding site" evidence="3 6 12">
    <location>
        <position position="487"/>
    </location>
    <ligand>
        <name>Zn(2+)</name>
        <dbReference type="ChEBI" id="CHEBI:29105"/>
        <note>catalytic</note>
    </ligand>
</feature>
<feature type="binding site" evidence="6 12">
    <location>
        <position position="513"/>
    </location>
    <ligand>
        <name>Zn(2+)</name>
        <dbReference type="ChEBI" id="CHEBI:29105"/>
        <note>catalytic</note>
    </ligand>
</feature>
<feature type="binding site" evidence="1">
    <location>
        <begin position="615"/>
        <end position="621"/>
    </location>
    <ligand>
        <name>substrate</name>
    </ligand>
</feature>
<feature type="modified residue" description="N-acetylalanine" evidence="13">
    <location>
        <position position="2"/>
    </location>
</feature>
<feature type="helix" evidence="14">
    <location>
        <begin position="7"/>
        <end position="9"/>
    </location>
</feature>
<feature type="helix" evidence="14">
    <location>
        <begin position="11"/>
        <end position="13"/>
    </location>
</feature>
<feature type="turn" evidence="14">
    <location>
        <begin position="21"/>
        <end position="23"/>
    </location>
</feature>
<feature type="helix" evidence="14">
    <location>
        <begin position="26"/>
        <end position="50"/>
    </location>
</feature>
<feature type="turn" evidence="14">
    <location>
        <begin position="55"/>
        <end position="58"/>
    </location>
</feature>
<feature type="helix" evidence="14">
    <location>
        <begin position="59"/>
        <end position="82"/>
    </location>
</feature>
<feature type="helix" evidence="14">
    <location>
        <begin position="86"/>
        <end position="107"/>
    </location>
</feature>
<feature type="helix" evidence="14">
    <location>
        <begin position="110"/>
        <end position="121"/>
    </location>
</feature>
<feature type="helix" evidence="14">
    <location>
        <begin position="123"/>
        <end position="127"/>
    </location>
</feature>
<feature type="helix" evidence="14">
    <location>
        <begin position="130"/>
        <end position="145"/>
    </location>
</feature>
<feature type="turn" evidence="14">
    <location>
        <begin position="146"/>
        <end position="149"/>
    </location>
</feature>
<feature type="helix" evidence="14">
    <location>
        <begin position="152"/>
        <end position="181"/>
    </location>
</feature>
<feature type="strand" evidence="14">
    <location>
        <begin position="184"/>
        <end position="187"/>
    </location>
</feature>
<feature type="helix" evidence="14">
    <location>
        <begin position="190"/>
        <end position="193"/>
    </location>
</feature>
<feature type="helix" evidence="14">
    <location>
        <begin position="198"/>
        <end position="210"/>
    </location>
</feature>
<feature type="turn" evidence="14">
    <location>
        <begin position="218"/>
        <end position="220"/>
    </location>
</feature>
<feature type="strand" evidence="14">
    <location>
        <begin position="223"/>
        <end position="228"/>
    </location>
</feature>
<feature type="helix" evidence="14">
    <location>
        <begin position="229"/>
        <end position="238"/>
    </location>
</feature>
<feature type="helix" evidence="14">
    <location>
        <begin position="242"/>
        <end position="252"/>
    </location>
</feature>
<feature type="turn" evidence="14">
    <location>
        <begin position="253"/>
        <end position="256"/>
    </location>
</feature>
<feature type="strand" evidence="14">
    <location>
        <begin position="257"/>
        <end position="259"/>
    </location>
</feature>
<feature type="helix" evidence="14">
    <location>
        <begin position="264"/>
        <end position="280"/>
    </location>
</feature>
<feature type="helix" evidence="14">
    <location>
        <begin position="286"/>
        <end position="291"/>
    </location>
</feature>
<feature type="strand" evidence="14">
    <location>
        <begin position="294"/>
        <end position="296"/>
    </location>
</feature>
<feature type="helix" evidence="14">
    <location>
        <begin position="298"/>
        <end position="329"/>
    </location>
</feature>
<feature type="turn" evidence="14">
    <location>
        <begin position="333"/>
        <end position="336"/>
    </location>
</feature>
<feature type="helix" evidence="14">
    <location>
        <begin position="340"/>
        <end position="354"/>
    </location>
</feature>
<feature type="helix" evidence="14">
    <location>
        <begin position="359"/>
        <end position="361"/>
    </location>
</feature>
<feature type="helix" evidence="14">
    <location>
        <begin position="363"/>
        <end position="365"/>
    </location>
</feature>
<feature type="helix" evidence="14">
    <location>
        <begin position="368"/>
        <end position="383"/>
    </location>
</feature>
<feature type="strand" evidence="14">
    <location>
        <begin position="386"/>
        <end position="389"/>
    </location>
</feature>
<feature type="strand" evidence="14">
    <location>
        <begin position="402"/>
        <end position="407"/>
    </location>
</feature>
<feature type="strand" evidence="14">
    <location>
        <begin position="413"/>
        <end position="422"/>
    </location>
</feature>
<feature type="turn" evidence="14">
    <location>
        <begin position="425"/>
        <end position="427"/>
    </location>
</feature>
<feature type="strand" evidence="14">
    <location>
        <begin position="433"/>
        <end position="438"/>
    </location>
</feature>
<feature type="strand" evidence="14">
    <location>
        <begin position="450"/>
        <end position="452"/>
    </location>
</feature>
<feature type="strand" evidence="14">
    <location>
        <begin position="455"/>
        <end position="462"/>
    </location>
</feature>
<feature type="helix" evidence="14">
    <location>
        <begin position="475"/>
        <end position="492"/>
    </location>
</feature>
<feature type="helix" evidence="14">
    <location>
        <begin position="499"/>
        <end position="501"/>
    </location>
</feature>
<feature type="turn" evidence="14">
    <location>
        <begin position="503"/>
        <end position="506"/>
    </location>
</feature>
<feature type="helix" evidence="14">
    <location>
        <begin position="509"/>
        <end position="512"/>
    </location>
</feature>
<feature type="helix" evidence="14">
    <location>
        <begin position="514"/>
        <end position="520"/>
    </location>
</feature>
<feature type="helix" evidence="14">
    <location>
        <begin position="521"/>
        <end position="523"/>
    </location>
</feature>
<feature type="helix" evidence="14">
    <location>
        <begin position="526"/>
        <end position="532"/>
    </location>
</feature>
<feature type="turn" evidence="14">
    <location>
        <begin position="536"/>
        <end position="538"/>
    </location>
</feature>
<feature type="helix" evidence="14">
    <location>
        <begin position="544"/>
        <end position="555"/>
    </location>
</feature>
<feature type="helix" evidence="14">
    <location>
        <begin position="558"/>
        <end position="577"/>
    </location>
</feature>
<feature type="strand" evidence="14">
    <location>
        <begin position="583"/>
        <end position="585"/>
    </location>
</feature>
<feature type="helix" evidence="14">
    <location>
        <begin position="587"/>
        <end position="598"/>
    </location>
</feature>
<feature type="helix" evidence="14">
    <location>
        <begin position="610"/>
        <end position="612"/>
    </location>
</feature>
<feature type="helix" evidence="14">
    <location>
        <begin position="614"/>
        <end position="617"/>
    </location>
</feature>
<feature type="turn" evidence="14">
    <location>
        <begin position="622"/>
        <end position="626"/>
    </location>
</feature>
<feature type="helix" evidence="14">
    <location>
        <begin position="627"/>
        <end position="645"/>
    </location>
</feature>
<feature type="helix" evidence="14">
    <location>
        <begin position="650"/>
        <end position="661"/>
    </location>
</feature>
<feature type="turn" evidence="14">
    <location>
        <begin position="662"/>
        <end position="666"/>
    </location>
</feature>
<feature type="helix" evidence="14">
    <location>
        <begin position="673"/>
        <end position="681"/>
    </location>
</feature>
<feature type="helix" evidence="14">
    <location>
        <begin position="688"/>
        <end position="693"/>
    </location>
</feature>
<reference key="1">
    <citation type="journal article" date="2000" name="Nature">
        <title>Sequence and analysis of chromosome 5 of the plant Arabidopsis thaliana.</title>
        <authorList>
            <person name="Tabata S."/>
            <person name="Kaneko T."/>
            <person name="Nakamura Y."/>
            <person name="Kotani H."/>
            <person name="Kato T."/>
            <person name="Asamizu E."/>
            <person name="Miyajima N."/>
            <person name="Sasamoto S."/>
            <person name="Kimura T."/>
            <person name="Hosouchi T."/>
            <person name="Kawashima K."/>
            <person name="Kohara M."/>
            <person name="Matsumoto M."/>
            <person name="Matsuno A."/>
            <person name="Muraki A."/>
            <person name="Nakayama S."/>
            <person name="Nakazaki N."/>
            <person name="Naruo K."/>
            <person name="Okumura S."/>
            <person name="Shinpo S."/>
            <person name="Takeuchi C."/>
            <person name="Wada T."/>
            <person name="Watanabe A."/>
            <person name="Yamada M."/>
            <person name="Yasuda M."/>
            <person name="Sato S."/>
            <person name="de la Bastide M."/>
            <person name="Huang E."/>
            <person name="Spiegel L."/>
            <person name="Gnoj L."/>
            <person name="O'Shaughnessy A."/>
            <person name="Preston R."/>
            <person name="Habermann K."/>
            <person name="Murray J."/>
            <person name="Johnson D."/>
            <person name="Rohlfing T."/>
            <person name="Nelson J."/>
            <person name="Stoneking T."/>
            <person name="Pepin K."/>
            <person name="Spieth J."/>
            <person name="Sekhon M."/>
            <person name="Armstrong J."/>
            <person name="Becker M."/>
            <person name="Belter E."/>
            <person name="Cordum H."/>
            <person name="Cordes M."/>
            <person name="Courtney L."/>
            <person name="Courtney W."/>
            <person name="Dante M."/>
            <person name="Du H."/>
            <person name="Edwards J."/>
            <person name="Fryman J."/>
            <person name="Haakensen B."/>
            <person name="Lamar E."/>
            <person name="Latreille P."/>
            <person name="Leonard S."/>
            <person name="Meyer R."/>
            <person name="Mulvaney E."/>
            <person name="Ozersky P."/>
            <person name="Riley A."/>
            <person name="Strowmatt C."/>
            <person name="Wagner-McPherson C."/>
            <person name="Wollam A."/>
            <person name="Yoakum M."/>
            <person name="Bell M."/>
            <person name="Dedhia N."/>
            <person name="Parnell L."/>
            <person name="Shah R."/>
            <person name="Rodriguez M."/>
            <person name="Hoon See L."/>
            <person name="Vil D."/>
            <person name="Baker J."/>
            <person name="Kirchoff K."/>
            <person name="Toth K."/>
            <person name="King L."/>
            <person name="Bahret A."/>
            <person name="Miller B."/>
            <person name="Marra M.A."/>
            <person name="Martienssen R."/>
            <person name="McCombie W.R."/>
            <person name="Wilson R.K."/>
            <person name="Murphy G."/>
            <person name="Bancroft I."/>
            <person name="Volckaert G."/>
            <person name="Wambutt R."/>
            <person name="Duesterhoeft A."/>
            <person name="Stiekema W."/>
            <person name="Pohl T."/>
            <person name="Entian K.-D."/>
            <person name="Terryn N."/>
            <person name="Hartley N."/>
            <person name="Bent E."/>
            <person name="Johnson S."/>
            <person name="Langham S.-A."/>
            <person name="McCullagh B."/>
            <person name="Robben J."/>
            <person name="Grymonprez B."/>
            <person name="Zimmermann W."/>
            <person name="Ramsperger U."/>
            <person name="Wedler H."/>
            <person name="Balke K."/>
            <person name="Wedler E."/>
            <person name="Peters S."/>
            <person name="van Staveren M."/>
            <person name="Dirkse W."/>
            <person name="Mooijman P."/>
            <person name="Klein Lankhorst R."/>
            <person name="Weitzenegger T."/>
            <person name="Bothe G."/>
            <person name="Rose M."/>
            <person name="Hauf J."/>
            <person name="Berneiser S."/>
            <person name="Hempel S."/>
            <person name="Feldpausch M."/>
            <person name="Lamberth S."/>
            <person name="Villarroel R."/>
            <person name="Gielen J."/>
            <person name="Ardiles W."/>
            <person name="Bents O."/>
            <person name="Lemcke K."/>
            <person name="Kolesov G."/>
            <person name="Mayer K.F.X."/>
            <person name="Rudd S."/>
            <person name="Schoof H."/>
            <person name="Schueller C."/>
            <person name="Zaccaria P."/>
            <person name="Mewes H.-W."/>
            <person name="Bevan M."/>
            <person name="Fransz P.F."/>
        </authorList>
    </citation>
    <scope>NUCLEOTIDE SEQUENCE [LARGE SCALE GENOMIC DNA]</scope>
    <source>
        <strain>cv. Columbia</strain>
    </source>
</reference>
<reference key="2">
    <citation type="journal article" date="2017" name="Plant J.">
        <title>Araport11: a complete reannotation of the Arabidopsis thaliana reference genome.</title>
        <authorList>
            <person name="Cheng C.Y."/>
            <person name="Krishnakumar V."/>
            <person name="Chan A.P."/>
            <person name="Thibaud-Nissen F."/>
            <person name="Schobel S."/>
            <person name="Town C.D."/>
        </authorList>
    </citation>
    <scope>GENOME REANNOTATION</scope>
    <source>
        <strain>cv. Columbia</strain>
    </source>
</reference>
<reference key="3">
    <citation type="journal article" date="2003" name="Science">
        <title>Empirical analysis of transcriptional activity in the Arabidopsis genome.</title>
        <authorList>
            <person name="Yamada K."/>
            <person name="Lim J."/>
            <person name="Dale J.M."/>
            <person name="Chen H."/>
            <person name="Shinn P."/>
            <person name="Palm C.J."/>
            <person name="Southwick A.M."/>
            <person name="Wu H.C."/>
            <person name="Kim C.J."/>
            <person name="Nguyen M."/>
            <person name="Pham P.K."/>
            <person name="Cheuk R.F."/>
            <person name="Karlin-Newmann G."/>
            <person name="Liu S.X."/>
            <person name="Lam B."/>
            <person name="Sakano H."/>
            <person name="Wu T."/>
            <person name="Yu G."/>
            <person name="Miranda M."/>
            <person name="Quach H.L."/>
            <person name="Tripp M."/>
            <person name="Chang C.H."/>
            <person name="Lee J.M."/>
            <person name="Toriumi M.J."/>
            <person name="Chan M.M."/>
            <person name="Tang C.C."/>
            <person name="Onodera C.S."/>
            <person name="Deng J.M."/>
            <person name="Akiyama K."/>
            <person name="Ansari Y."/>
            <person name="Arakawa T."/>
            <person name="Banh J."/>
            <person name="Banno F."/>
            <person name="Bowser L."/>
            <person name="Brooks S.Y."/>
            <person name="Carninci P."/>
            <person name="Chao Q."/>
            <person name="Choy N."/>
            <person name="Enju A."/>
            <person name="Goldsmith A.D."/>
            <person name="Gurjal M."/>
            <person name="Hansen N.F."/>
            <person name="Hayashizaki Y."/>
            <person name="Johnson-Hopson C."/>
            <person name="Hsuan V.W."/>
            <person name="Iida K."/>
            <person name="Karnes M."/>
            <person name="Khan S."/>
            <person name="Koesema E."/>
            <person name="Ishida J."/>
            <person name="Jiang P.X."/>
            <person name="Jones T."/>
            <person name="Kawai J."/>
            <person name="Kamiya A."/>
            <person name="Meyers C."/>
            <person name="Nakajima M."/>
            <person name="Narusaka M."/>
            <person name="Seki M."/>
            <person name="Sakurai T."/>
            <person name="Satou M."/>
            <person name="Tamse R."/>
            <person name="Vaysberg M."/>
            <person name="Wallender E.K."/>
            <person name="Wong C."/>
            <person name="Yamamura Y."/>
            <person name="Yuan S."/>
            <person name="Shinozaki K."/>
            <person name="Davis R.W."/>
            <person name="Theologis A."/>
            <person name="Ecker J.R."/>
        </authorList>
    </citation>
    <scope>NUCLEOTIDE SEQUENCE [LARGE SCALE MRNA]</scope>
    <source>
        <strain>cv. Columbia</strain>
    </source>
</reference>
<reference key="4">
    <citation type="journal article" date="2012" name="Mol. Cell. Proteomics">
        <title>Comparative large-scale characterisation of plant vs. mammal proteins reveals similar and idiosyncratic N-alpha acetylation features.</title>
        <authorList>
            <person name="Bienvenut W.V."/>
            <person name="Sumpton D."/>
            <person name="Martinez A."/>
            <person name="Lilla S."/>
            <person name="Espagne C."/>
            <person name="Meinnel T."/>
            <person name="Giglione C."/>
        </authorList>
    </citation>
    <scope>ACETYLATION [LARGE SCALE ANALYSIS] AT ALA-2</scope>
    <scope>CLEAVAGE OF INITIATOR METHIONINE [LARGE SCALE ANALYSIS]</scope>
    <scope>IDENTIFICATION BY MASS SPECTROMETRY [LARGE SCALE ANALYSIS]</scope>
</reference>
<reference key="5">
    <citation type="journal article" date="2013" name="Plant J.">
        <title>The Arabidopsis oligopeptidases TOP1 and TOP2 are salicylic acid targets that modulate SA-mediated signaling and the immune response.</title>
        <authorList>
            <person name="Moreau M."/>
            <person name="Westlake T."/>
            <person name="Zampogna G."/>
            <person name="Popescu G."/>
            <person name="Tian M."/>
            <person name="Noutsos C."/>
            <person name="Popescu S."/>
        </authorList>
    </citation>
    <scope>FUNCTION</scope>
    <scope>SALICYLIC ACID-BINDING</scope>
    <scope>INDUCTION BY FLG22; PATHOGEN INFECTION AND ELICITOR</scope>
    <scope>DEVELOPMENTAL STAGE</scope>
    <scope>DISRUPTION PHENOTYPE</scope>
    <scope>ACTIVITY REGULATION</scope>
</reference>
<reference key="6">
    <citation type="journal article" date="2013" name="Proc. Natl. Acad. Sci. U.S.A.">
        <title>Organellar oligopeptidase (OOP) provides a complementary pathway for targeting peptide degradation in mitochondria and chloroplasts.</title>
        <authorList>
            <person name="Kmiec B."/>
            <person name="Teixeira P.F."/>
            <person name="Berntsson R.P."/>
            <person name="Murcha M.W."/>
            <person name="Branca R.M."/>
            <person name="Radomiljac J.D."/>
            <person name="Regberg J."/>
            <person name="Svensson L.M."/>
            <person name="Bakali A."/>
            <person name="Langel U."/>
            <person name="Lehtioe J."/>
            <person name="Whelan J."/>
            <person name="Stenmark P."/>
            <person name="Glaser E."/>
        </authorList>
    </citation>
    <scope>FUNCTION</scope>
    <scope>SUBCELLULAR LOCATION</scope>
</reference>
<reference key="7">
    <citation type="journal article" date="2014" name="Acta Crystallogr. F">
        <title>Structure of the Arabidopsis thaliana TOP2 oligopeptidase.</title>
        <authorList>
            <person name="Wang R."/>
            <person name="Rajagopalan K."/>
            <person name="Sadre-Bazzaz K."/>
            <person name="Moreau M."/>
            <person name="Klessig D.F."/>
            <person name="Tong L."/>
        </authorList>
    </citation>
    <scope>X-RAY CRYSTALLOGRAPHY (3.00 ANGSTROMS) IN COMPLEX WITH ZINC</scope>
</reference>
<proteinExistence type="evidence at protein level"/>
<accession>Q949P2</accession>
<accession>Q9LXA6</accession>
<sequence>MASEDTLSSNPLLQNFDFPPFDSVDAHHVRPGIRALLQQLEAELEQLEKAVEPSWPKLVEPLEKIIDRLSVVWGMINHLKAVKDTPELRAAIEEVQPEKVKFQLRLGQSKPIYNAFKAIRESPDWNSLSEARQRLVEAQIKEAVLSGIALEDDKREEFNKIEQELEKLSHKFSENVLDATKKFEKLITDKKEIEGLPPSALGLFAQAAVSKGHETATADTGPWLITLDAPSYLPVMQHAKNRALREEVYRAYLSRASSGDLDNTAIIDQILKLRLEKAKLLGYRNYAEVSMATKMATVEKADELLEKLRSASWDPAVQDIEDLKSFAKNQGAAEADSLTHWDITFWSERLRESKYDINEEELRPYFSLPKVMDALFGLAKTLFGIDVVPADGVAPVWNSDVRFYCVKDSSGNPTAYFYFDPYSRPSEKRDGAWMDEVFSRSRVMAQKGSSVRLPVAQMVCNQTPPVGDKPSLMTFREVETVFHEFGHALQHMLTKEDEGLVAGIRNIEWDAVELPSQFMENWCYHRDTLMSIAKHYQTGETLPENVYKKLLAARTFRAGSLSLRQLKFATVDLELHTKYMPGGAETIYEVDQRVSIKTQVIPPLPEDRFLCSFSHIFAGGYAAGYYSYKWAEVLSADAFSAFEDAGLDDIKAVKETGQRFRNTILALGGGKAPLKVFVEFRGREPSPEPLLRHNGLLAASA</sequence>
<name>COPDA_ARATH</name>
<comment type="function">
    <text evidence="1 4 5">Oligopeptidase that may be involved in the degradation of proteasome-generated peptides (By similarity). Binds salicylic acid.</text>
</comment>
<comment type="catalytic activity">
    <reaction>
        <text>Hydrolysis of oligopeptides, with broad specificity. Gly or Ala commonly occur as P1 or P1' residues, but more distant residues are also important, as is shown by the fact that Z-Gly-Pro-Gly-|-Gly-Pro-Ala is cleaved, but not Z-(Gly)(5).</text>
        <dbReference type="EC" id="3.4.24.70"/>
    </reaction>
</comment>
<comment type="cofactor">
    <cofactor evidence="1">
        <name>Zn(2+)</name>
        <dbReference type="ChEBI" id="CHEBI:29105"/>
    </cofactor>
    <text evidence="1">Binds 1 zinc ion.</text>
</comment>
<comment type="activity regulation">
    <text evidence="4">Inhibited by salicylic acid.</text>
</comment>
<comment type="subcellular location">
    <subcellularLocation>
        <location evidence="5">Cytoplasm</location>
        <location evidence="5">Cytosol</location>
    </subcellularLocation>
</comment>
<comment type="developmental stage">
    <text evidence="4">Up-regulated during senescence.</text>
</comment>
<comment type="induction">
    <text evidence="4">Up-regulated by pathogen infection, elicitor treatment and flg22, a 22-amino acid sequence of the conserved N-terminal part of flagellin.</text>
</comment>
<comment type="disruption phenotype">
    <text evidence="4">No effect on germination.</text>
</comment>
<comment type="similarity">
    <text evidence="9">Belongs to the peptidase M3 family.</text>
</comment>
<comment type="sequence caution" evidence="9">
    <conflict type="erroneous gene model prediction">
        <sequence resource="EMBL-CDS" id="CAB89389"/>
    </conflict>
</comment>
<keyword id="KW-0002">3D-structure</keyword>
<keyword id="KW-0007">Acetylation</keyword>
<keyword id="KW-0175">Coiled coil</keyword>
<keyword id="KW-0963">Cytoplasm</keyword>
<keyword id="KW-0378">Hydrolase</keyword>
<keyword id="KW-0479">Metal-binding</keyword>
<keyword id="KW-0482">Metalloprotease</keyword>
<keyword id="KW-0645">Protease</keyword>
<keyword id="KW-1185">Reference proteome</keyword>
<keyword id="KW-0862">Zinc</keyword>
<protein>
    <recommendedName>
        <fullName evidence="8">Probable cytosolic oligopeptidase A</fullName>
        <ecNumber>3.4.24.70</ecNumber>
    </recommendedName>
    <alternativeName>
        <fullName evidence="7">Thimet metalloendopeptidase 2</fullName>
    </alternativeName>
    <alternativeName>
        <fullName>Zincin-like metalloproteases family protein 2</fullName>
    </alternativeName>
</protein>
<gene>
    <name evidence="8" type="primary">CYOP</name>
    <name evidence="7" type="synonym">TOP2</name>
    <name evidence="10" type="ordered locus">At5g10540</name>
    <name evidence="11" type="ORF">F12B17.110</name>
</gene>
<organism>
    <name type="scientific">Arabidopsis thaliana</name>
    <name type="common">Mouse-ear cress</name>
    <dbReference type="NCBI Taxonomy" id="3702"/>
    <lineage>
        <taxon>Eukaryota</taxon>
        <taxon>Viridiplantae</taxon>
        <taxon>Streptophyta</taxon>
        <taxon>Embryophyta</taxon>
        <taxon>Tracheophyta</taxon>
        <taxon>Spermatophyta</taxon>
        <taxon>Magnoliopsida</taxon>
        <taxon>eudicotyledons</taxon>
        <taxon>Gunneridae</taxon>
        <taxon>Pentapetalae</taxon>
        <taxon>rosids</taxon>
        <taxon>malvids</taxon>
        <taxon>Brassicales</taxon>
        <taxon>Brassicaceae</taxon>
        <taxon>Camelineae</taxon>
        <taxon>Arabidopsis</taxon>
    </lineage>
</organism>
<evidence type="ECO:0000250" key="1"/>
<evidence type="ECO:0000255" key="2"/>
<evidence type="ECO:0000255" key="3">
    <source>
        <dbReference type="PROSITE-ProRule" id="PRU10095"/>
    </source>
</evidence>
<evidence type="ECO:0000269" key="4">
    <source>
    </source>
</evidence>
<evidence type="ECO:0000269" key="5">
    <source>
    </source>
</evidence>
<evidence type="ECO:0000269" key="6">
    <source>
    </source>
</evidence>
<evidence type="ECO:0000303" key="7">
    <source>
    </source>
</evidence>
<evidence type="ECO:0000303" key="8">
    <source>
    </source>
</evidence>
<evidence type="ECO:0000305" key="9"/>
<evidence type="ECO:0000312" key="10">
    <source>
        <dbReference type="Araport" id="AT5G10540"/>
    </source>
</evidence>
<evidence type="ECO:0000312" key="11">
    <source>
        <dbReference type="EMBL" id="CAB89389.1"/>
    </source>
</evidence>
<evidence type="ECO:0007744" key="12">
    <source>
        <dbReference type="PDB" id="4PUT"/>
    </source>
</evidence>
<evidence type="ECO:0007744" key="13">
    <source>
    </source>
</evidence>
<evidence type="ECO:0007829" key="14">
    <source>
        <dbReference type="PDB" id="4PUT"/>
    </source>
</evidence>
<dbReference type="EC" id="3.4.24.70"/>
<dbReference type="EMBL" id="AL353995">
    <property type="protein sequence ID" value="CAB89389.1"/>
    <property type="status" value="ALT_SEQ"/>
    <property type="molecule type" value="Genomic_DNA"/>
</dbReference>
<dbReference type="EMBL" id="CP002688">
    <property type="protein sequence ID" value="AED91561.1"/>
    <property type="molecule type" value="Genomic_DNA"/>
</dbReference>
<dbReference type="EMBL" id="AY050978">
    <property type="protein sequence ID" value="AAK93655.1"/>
    <property type="molecule type" value="mRNA"/>
</dbReference>
<dbReference type="EMBL" id="BT002369">
    <property type="protein sequence ID" value="AAN86202.1"/>
    <property type="molecule type" value="mRNA"/>
</dbReference>
<dbReference type="PIR" id="T49985">
    <property type="entry name" value="T49985"/>
</dbReference>
<dbReference type="RefSeq" id="NP_568232.1">
    <property type="nucleotide sequence ID" value="NM_121092.4"/>
</dbReference>
<dbReference type="PDB" id="4PUT">
    <property type="method" value="X-ray"/>
    <property type="resolution" value="3.00 A"/>
    <property type="chains" value="A=1-701"/>
</dbReference>
<dbReference type="PDBsum" id="4PUT"/>
<dbReference type="SMR" id="Q949P2"/>
<dbReference type="BioGRID" id="16197">
    <property type="interactions" value="31"/>
</dbReference>
<dbReference type="FunCoup" id="Q949P2">
    <property type="interactions" value="2533"/>
</dbReference>
<dbReference type="STRING" id="3702.Q949P2"/>
<dbReference type="MEROPS" id="M03.A02"/>
<dbReference type="iPTMnet" id="Q949P2"/>
<dbReference type="PaxDb" id="3702-AT5G10540.1"/>
<dbReference type="ProteomicsDB" id="240949"/>
<dbReference type="EnsemblPlants" id="AT5G10540.1">
    <property type="protein sequence ID" value="AT5G10540.1"/>
    <property type="gene ID" value="AT5G10540"/>
</dbReference>
<dbReference type="GeneID" id="830919"/>
<dbReference type="Gramene" id="AT5G10540.1">
    <property type="protein sequence ID" value="AT5G10540.1"/>
    <property type="gene ID" value="AT5G10540"/>
</dbReference>
<dbReference type="KEGG" id="ath:AT5G10540"/>
<dbReference type="Araport" id="AT5G10540"/>
<dbReference type="TAIR" id="AT5G10540">
    <property type="gene designation" value="TOP2"/>
</dbReference>
<dbReference type="eggNOG" id="KOG2089">
    <property type="taxonomic scope" value="Eukaryota"/>
</dbReference>
<dbReference type="HOGENOM" id="CLU_001805_4_1_1"/>
<dbReference type="InParanoid" id="Q949P2"/>
<dbReference type="OMA" id="QPLEGPW"/>
<dbReference type="OrthoDB" id="534666at2759"/>
<dbReference type="PhylomeDB" id="Q949P2"/>
<dbReference type="BRENDA" id="3.4.24.70">
    <property type="organism ID" value="399"/>
</dbReference>
<dbReference type="EvolutionaryTrace" id="Q949P2"/>
<dbReference type="PRO" id="PR:Q949P2"/>
<dbReference type="Proteomes" id="UP000006548">
    <property type="component" value="Chromosome 5"/>
</dbReference>
<dbReference type="ExpressionAtlas" id="Q949P2">
    <property type="expression patterns" value="baseline and differential"/>
</dbReference>
<dbReference type="GO" id="GO:0048046">
    <property type="term" value="C:apoplast"/>
    <property type="evidence" value="ECO:0007005"/>
    <property type="project" value="TAIR"/>
</dbReference>
<dbReference type="GO" id="GO:0005829">
    <property type="term" value="C:cytosol"/>
    <property type="evidence" value="ECO:0007005"/>
    <property type="project" value="TAIR"/>
</dbReference>
<dbReference type="GO" id="GO:0005886">
    <property type="term" value="C:plasma membrane"/>
    <property type="evidence" value="ECO:0007005"/>
    <property type="project" value="TAIR"/>
</dbReference>
<dbReference type="GO" id="GO:0046872">
    <property type="term" value="F:metal ion binding"/>
    <property type="evidence" value="ECO:0007669"/>
    <property type="project" value="UniProtKB-KW"/>
</dbReference>
<dbReference type="GO" id="GO:0004222">
    <property type="term" value="F:metalloendopeptidase activity"/>
    <property type="evidence" value="ECO:0007669"/>
    <property type="project" value="UniProtKB-EC"/>
</dbReference>
<dbReference type="GO" id="GO:0006508">
    <property type="term" value="P:proteolysis"/>
    <property type="evidence" value="ECO:0007669"/>
    <property type="project" value="UniProtKB-KW"/>
</dbReference>
<dbReference type="CDD" id="cd06456">
    <property type="entry name" value="M3A_DCP"/>
    <property type="match status" value="1"/>
</dbReference>
<dbReference type="FunFam" id="3.40.390.10:FF:000009">
    <property type="entry name" value="Oligopeptidase A"/>
    <property type="match status" value="1"/>
</dbReference>
<dbReference type="Gene3D" id="3.40.390.10">
    <property type="entry name" value="Collagenase (Catalytic Domain)"/>
    <property type="match status" value="1"/>
</dbReference>
<dbReference type="Gene3D" id="1.20.1050.40">
    <property type="entry name" value="Endopeptidase. Chain P, domain 1"/>
    <property type="match status" value="1"/>
</dbReference>
<dbReference type="Gene3D" id="1.10.1370.10">
    <property type="entry name" value="Neurolysin, domain 3"/>
    <property type="match status" value="1"/>
</dbReference>
<dbReference type="InterPro" id="IPR034005">
    <property type="entry name" value="M3A_DCP"/>
</dbReference>
<dbReference type="InterPro" id="IPR024079">
    <property type="entry name" value="MetalloPept_cat_dom_sf"/>
</dbReference>
<dbReference type="InterPro" id="IPR024077">
    <property type="entry name" value="Neurolysin/TOP_dom2"/>
</dbReference>
<dbReference type="InterPro" id="IPR024080">
    <property type="entry name" value="Neurolysin/TOP_N"/>
</dbReference>
<dbReference type="InterPro" id="IPR045666">
    <property type="entry name" value="OpdA_N"/>
</dbReference>
<dbReference type="InterPro" id="IPR045090">
    <property type="entry name" value="Pept_M3A_M3B"/>
</dbReference>
<dbReference type="InterPro" id="IPR001567">
    <property type="entry name" value="Pept_M3A_M3B_dom"/>
</dbReference>
<dbReference type="PANTHER" id="PTHR11804:SF73">
    <property type="entry name" value="CYTOSOLIC OLIGOPEPTIDASE A-RELATED"/>
    <property type="match status" value="1"/>
</dbReference>
<dbReference type="PANTHER" id="PTHR11804">
    <property type="entry name" value="PROTEASE M3 THIMET OLIGOPEPTIDASE-RELATED"/>
    <property type="match status" value="1"/>
</dbReference>
<dbReference type="Pfam" id="PF01432">
    <property type="entry name" value="Peptidase_M3"/>
    <property type="match status" value="1"/>
</dbReference>
<dbReference type="Pfam" id="PF19310">
    <property type="entry name" value="TOP_N"/>
    <property type="match status" value="1"/>
</dbReference>
<dbReference type="SUPFAM" id="SSF55486">
    <property type="entry name" value="Metalloproteases ('zincins'), catalytic domain"/>
    <property type="match status" value="1"/>
</dbReference>
<dbReference type="PROSITE" id="PS00142">
    <property type="entry name" value="ZINC_PROTEASE"/>
    <property type="match status" value="1"/>
</dbReference>